<name>RL18_SYNJB</name>
<feature type="chain" id="PRO_0000251384" description="Large ribosomal subunit protein uL18">
    <location>
        <begin position="1"/>
        <end position="122"/>
    </location>
</feature>
<proteinExistence type="inferred from homology"/>
<sequence length="122" mass="13826">MKTSRKITTQRRHRRIRRKVFGTAERPRLAVFRSHRHIYAQVIDDVAQHTLASASTLDRELREKFKETGTATQEAAALVGRSVAERALQMGISRVVFDRGGKLYHGRVQALAEAAREAGLQF</sequence>
<keyword id="KW-1185">Reference proteome</keyword>
<keyword id="KW-0687">Ribonucleoprotein</keyword>
<keyword id="KW-0689">Ribosomal protein</keyword>
<keyword id="KW-0694">RNA-binding</keyword>
<keyword id="KW-0699">rRNA-binding</keyword>
<gene>
    <name evidence="1" type="primary">rplR</name>
    <name evidence="1" type="synonym">rpl18</name>
    <name type="ordered locus">CYB_2612</name>
</gene>
<evidence type="ECO:0000255" key="1">
    <source>
        <dbReference type="HAMAP-Rule" id="MF_01337"/>
    </source>
</evidence>
<evidence type="ECO:0000305" key="2"/>
<accession>Q2JIL2</accession>
<organism>
    <name type="scientific">Synechococcus sp. (strain JA-2-3B'a(2-13))</name>
    <name type="common">Cyanobacteria bacterium Yellowstone B-Prime</name>
    <dbReference type="NCBI Taxonomy" id="321332"/>
    <lineage>
        <taxon>Bacteria</taxon>
        <taxon>Bacillati</taxon>
        <taxon>Cyanobacteriota</taxon>
        <taxon>Cyanophyceae</taxon>
        <taxon>Synechococcales</taxon>
        <taxon>Synechococcaceae</taxon>
        <taxon>Synechococcus</taxon>
    </lineage>
</organism>
<protein>
    <recommendedName>
        <fullName evidence="1">Large ribosomal subunit protein uL18</fullName>
    </recommendedName>
    <alternativeName>
        <fullName evidence="2">50S ribosomal protein L18</fullName>
    </alternativeName>
</protein>
<comment type="function">
    <text evidence="1">This is one of the proteins that bind and probably mediate the attachment of the 5S RNA into the large ribosomal subunit, where it forms part of the central protuberance.</text>
</comment>
<comment type="subunit">
    <text evidence="1">Part of the 50S ribosomal subunit; part of the 5S rRNA/L5/L18/L25 subcomplex. Contacts the 5S and 23S rRNAs.</text>
</comment>
<comment type="similarity">
    <text evidence="1">Belongs to the universal ribosomal protein uL18 family.</text>
</comment>
<reference key="1">
    <citation type="journal article" date="2007" name="ISME J.">
        <title>Population level functional diversity in a microbial community revealed by comparative genomic and metagenomic analyses.</title>
        <authorList>
            <person name="Bhaya D."/>
            <person name="Grossman A.R."/>
            <person name="Steunou A.-S."/>
            <person name="Khuri N."/>
            <person name="Cohan F.M."/>
            <person name="Hamamura N."/>
            <person name="Melendrez M.C."/>
            <person name="Bateson M.M."/>
            <person name="Ward D.M."/>
            <person name="Heidelberg J.F."/>
        </authorList>
    </citation>
    <scope>NUCLEOTIDE SEQUENCE [LARGE SCALE GENOMIC DNA]</scope>
    <source>
        <strain>JA-2-3B'a(2-13)</strain>
    </source>
</reference>
<dbReference type="EMBL" id="CP000240">
    <property type="protein sequence ID" value="ABD03542.1"/>
    <property type="molecule type" value="Genomic_DNA"/>
</dbReference>
<dbReference type="RefSeq" id="WP_011434167.1">
    <property type="nucleotide sequence ID" value="NC_007776.1"/>
</dbReference>
<dbReference type="SMR" id="Q2JIL2"/>
<dbReference type="STRING" id="321332.CYB_2612"/>
<dbReference type="KEGG" id="cyb:CYB_2612"/>
<dbReference type="eggNOG" id="COG0256">
    <property type="taxonomic scope" value="Bacteria"/>
</dbReference>
<dbReference type="HOGENOM" id="CLU_098841_0_1_3"/>
<dbReference type="OrthoDB" id="9810939at2"/>
<dbReference type="Proteomes" id="UP000001938">
    <property type="component" value="Chromosome"/>
</dbReference>
<dbReference type="GO" id="GO:0022625">
    <property type="term" value="C:cytosolic large ribosomal subunit"/>
    <property type="evidence" value="ECO:0007669"/>
    <property type="project" value="TreeGrafter"/>
</dbReference>
<dbReference type="GO" id="GO:0008097">
    <property type="term" value="F:5S rRNA binding"/>
    <property type="evidence" value="ECO:0007669"/>
    <property type="project" value="TreeGrafter"/>
</dbReference>
<dbReference type="GO" id="GO:0003735">
    <property type="term" value="F:structural constituent of ribosome"/>
    <property type="evidence" value="ECO:0007669"/>
    <property type="project" value="InterPro"/>
</dbReference>
<dbReference type="GO" id="GO:0006412">
    <property type="term" value="P:translation"/>
    <property type="evidence" value="ECO:0007669"/>
    <property type="project" value="UniProtKB-UniRule"/>
</dbReference>
<dbReference type="CDD" id="cd00432">
    <property type="entry name" value="Ribosomal_L18_L5e"/>
    <property type="match status" value="1"/>
</dbReference>
<dbReference type="FunFam" id="3.30.420.100:FF:000001">
    <property type="entry name" value="50S ribosomal protein L18"/>
    <property type="match status" value="1"/>
</dbReference>
<dbReference type="Gene3D" id="3.30.420.100">
    <property type="match status" value="1"/>
</dbReference>
<dbReference type="HAMAP" id="MF_01337_B">
    <property type="entry name" value="Ribosomal_uL18_B"/>
    <property type="match status" value="1"/>
</dbReference>
<dbReference type="InterPro" id="IPR004389">
    <property type="entry name" value="Ribosomal_uL18_bac-type"/>
</dbReference>
<dbReference type="InterPro" id="IPR005484">
    <property type="entry name" value="Ribosomal_uL18_bac/euk"/>
</dbReference>
<dbReference type="NCBIfam" id="TIGR00060">
    <property type="entry name" value="L18_bact"/>
    <property type="match status" value="1"/>
</dbReference>
<dbReference type="PANTHER" id="PTHR12899">
    <property type="entry name" value="39S RIBOSOMAL PROTEIN L18, MITOCHONDRIAL"/>
    <property type="match status" value="1"/>
</dbReference>
<dbReference type="PANTHER" id="PTHR12899:SF3">
    <property type="entry name" value="LARGE RIBOSOMAL SUBUNIT PROTEIN UL18M"/>
    <property type="match status" value="1"/>
</dbReference>
<dbReference type="Pfam" id="PF00861">
    <property type="entry name" value="Ribosomal_L18p"/>
    <property type="match status" value="1"/>
</dbReference>
<dbReference type="SUPFAM" id="SSF53137">
    <property type="entry name" value="Translational machinery components"/>
    <property type="match status" value="1"/>
</dbReference>